<comment type="function">
    <text evidence="1">Catalyzes the production of L-lysyl-tRNA(Lys)transfer and the transfer of a lysyl group from L-lysyl-tRNA(Lys) to membrane-bound phosphatidylglycerol (PG), which produces lysylphosphatidylglycerol (LPG), one of the components of the bacterial membrane with a positive net charge. LPG synthesis contributes to the resistance to cationic antimicrobial peptides (CAMPs) and likely protects M.tuberculosis against the CAMPs produced by competiting microorganisms (bacteriocins). In fact, the modification of anionic phosphatidylglycerol with positively charged L-lysine results in repulsion of the peptides (By similarity).</text>
</comment>
<comment type="catalytic activity">
    <reaction>
        <text>tRNA(Lys) + L-lysine + ATP = L-lysyl-tRNA(Lys) + AMP + diphosphate</text>
        <dbReference type="Rhea" id="RHEA:20792"/>
        <dbReference type="Rhea" id="RHEA-COMP:9696"/>
        <dbReference type="Rhea" id="RHEA-COMP:9697"/>
        <dbReference type="ChEBI" id="CHEBI:30616"/>
        <dbReference type="ChEBI" id="CHEBI:32551"/>
        <dbReference type="ChEBI" id="CHEBI:33019"/>
        <dbReference type="ChEBI" id="CHEBI:78442"/>
        <dbReference type="ChEBI" id="CHEBI:78529"/>
        <dbReference type="ChEBI" id="CHEBI:456215"/>
        <dbReference type="EC" id="6.1.1.6"/>
    </reaction>
</comment>
<comment type="catalytic activity">
    <reaction>
        <text>L-lysyl-tRNA(Lys) + a 1,2-diacyl-sn-glycero-3-phospho-(1'-sn-glycerol) = a 1,2-diacyl-sn-glycero-3-phospho-1'-(3'-O-L-lysyl)-sn-glycerol + tRNA(Lys)</text>
        <dbReference type="Rhea" id="RHEA:10668"/>
        <dbReference type="Rhea" id="RHEA-COMP:9696"/>
        <dbReference type="Rhea" id="RHEA-COMP:9697"/>
        <dbReference type="ChEBI" id="CHEBI:64716"/>
        <dbReference type="ChEBI" id="CHEBI:75792"/>
        <dbReference type="ChEBI" id="CHEBI:78442"/>
        <dbReference type="ChEBI" id="CHEBI:78529"/>
        <dbReference type="EC" id="2.3.2.3"/>
    </reaction>
</comment>
<comment type="cofactor">
    <cofactor evidence="1">
        <name>Mg(2+)</name>
        <dbReference type="ChEBI" id="CHEBI:18420"/>
    </cofactor>
    <text evidence="1">Binds 3 Mg(2+) ions per subunit.</text>
</comment>
<comment type="subcellular location">
    <subcellularLocation>
        <location evidence="4">Cell membrane</location>
        <topology evidence="4">Multi-pass membrane protein</topology>
    </subcellularLocation>
</comment>
<comment type="similarity">
    <text evidence="4">In the N-terminal section; belongs to the LPG synthetase family.</text>
</comment>
<comment type="similarity">
    <text evidence="4">In the C-terminal section; belongs to the class-II aminoacyl-tRNA synthetase family.</text>
</comment>
<proteinExistence type="inferred from homology"/>
<organism>
    <name type="scientific">Mycolicibacterium paratuberculosis (strain ATCC BAA-968 / K-10)</name>
    <name type="common">Mycobacterium paratuberculosis</name>
    <dbReference type="NCBI Taxonomy" id="262316"/>
    <lineage>
        <taxon>Bacteria</taxon>
        <taxon>Bacillati</taxon>
        <taxon>Actinomycetota</taxon>
        <taxon>Actinomycetes</taxon>
        <taxon>Mycobacteriales</taxon>
        <taxon>Mycobacteriaceae</taxon>
        <taxon>Mycobacterium</taxon>
        <taxon>Mycobacterium avium complex (MAC)</taxon>
    </lineage>
</organism>
<dbReference type="EC" id="6.1.1.6"/>
<dbReference type="EC" id="2.3.2.3"/>
<dbReference type="EMBL" id="AE016958">
    <property type="protein sequence ID" value="AAS03668.1"/>
    <property type="molecule type" value="Genomic_DNA"/>
</dbReference>
<dbReference type="SMR" id="Q740J9"/>
<dbReference type="STRING" id="262316.MAP_1351c"/>
<dbReference type="KEGG" id="mpa:MAP_1351c"/>
<dbReference type="eggNOG" id="COG1190">
    <property type="taxonomic scope" value="Bacteria"/>
</dbReference>
<dbReference type="eggNOG" id="COG2898">
    <property type="taxonomic scope" value="Bacteria"/>
</dbReference>
<dbReference type="HOGENOM" id="CLU_008255_2_1_11"/>
<dbReference type="Proteomes" id="UP000000580">
    <property type="component" value="Chromosome"/>
</dbReference>
<dbReference type="GO" id="GO:0005829">
    <property type="term" value="C:cytosol"/>
    <property type="evidence" value="ECO:0007669"/>
    <property type="project" value="TreeGrafter"/>
</dbReference>
<dbReference type="GO" id="GO:0005886">
    <property type="term" value="C:plasma membrane"/>
    <property type="evidence" value="ECO:0007669"/>
    <property type="project" value="UniProtKB-SubCell"/>
</dbReference>
<dbReference type="GO" id="GO:0005524">
    <property type="term" value="F:ATP binding"/>
    <property type="evidence" value="ECO:0007669"/>
    <property type="project" value="UniProtKB-UniRule"/>
</dbReference>
<dbReference type="GO" id="GO:0003677">
    <property type="term" value="F:DNA binding"/>
    <property type="evidence" value="ECO:0007669"/>
    <property type="project" value="UniProtKB-KW"/>
</dbReference>
<dbReference type="GO" id="GO:0004824">
    <property type="term" value="F:lysine-tRNA ligase activity"/>
    <property type="evidence" value="ECO:0007669"/>
    <property type="project" value="UniProtKB-UniRule"/>
</dbReference>
<dbReference type="GO" id="GO:0000287">
    <property type="term" value="F:magnesium ion binding"/>
    <property type="evidence" value="ECO:0007669"/>
    <property type="project" value="UniProtKB-UniRule"/>
</dbReference>
<dbReference type="GO" id="GO:0050071">
    <property type="term" value="F:phosphatidylglycerol lysyltransferase activity"/>
    <property type="evidence" value="ECO:0007669"/>
    <property type="project" value="UniProtKB-EC"/>
</dbReference>
<dbReference type="GO" id="GO:0000049">
    <property type="term" value="F:tRNA binding"/>
    <property type="evidence" value="ECO:0007669"/>
    <property type="project" value="TreeGrafter"/>
</dbReference>
<dbReference type="GO" id="GO:0006629">
    <property type="term" value="P:lipid metabolic process"/>
    <property type="evidence" value="ECO:0007669"/>
    <property type="project" value="UniProtKB-KW"/>
</dbReference>
<dbReference type="GO" id="GO:0006430">
    <property type="term" value="P:lysyl-tRNA aminoacylation"/>
    <property type="evidence" value="ECO:0007669"/>
    <property type="project" value="UniProtKB-UniRule"/>
</dbReference>
<dbReference type="GO" id="GO:0046677">
    <property type="term" value="P:response to antibiotic"/>
    <property type="evidence" value="ECO:0007669"/>
    <property type="project" value="UniProtKB-KW"/>
</dbReference>
<dbReference type="CDD" id="cd04322">
    <property type="entry name" value="LysRS_N"/>
    <property type="match status" value="1"/>
</dbReference>
<dbReference type="Gene3D" id="3.30.930.10">
    <property type="entry name" value="Bira Bifunctional Protein, Domain 2"/>
    <property type="match status" value="1"/>
</dbReference>
<dbReference type="Gene3D" id="2.40.50.140">
    <property type="entry name" value="Nucleic acid-binding proteins"/>
    <property type="match status" value="1"/>
</dbReference>
<dbReference type="HAMAP" id="MF_00252">
    <property type="entry name" value="Lys_tRNA_synth_class2"/>
    <property type="match status" value="1"/>
</dbReference>
<dbReference type="InterPro" id="IPR004364">
    <property type="entry name" value="Aa-tRNA-synt_II"/>
</dbReference>
<dbReference type="InterPro" id="IPR006195">
    <property type="entry name" value="aa-tRNA-synth_II"/>
</dbReference>
<dbReference type="InterPro" id="IPR045864">
    <property type="entry name" value="aa-tRNA-synth_II/BPL/LPL"/>
</dbReference>
<dbReference type="InterPro" id="IPR024320">
    <property type="entry name" value="LPG_synthase_C"/>
</dbReference>
<dbReference type="InterPro" id="IPR002313">
    <property type="entry name" value="Lys-tRNA-ligase_II"/>
</dbReference>
<dbReference type="InterPro" id="IPR044136">
    <property type="entry name" value="Lys-tRNA-ligase_II_N"/>
</dbReference>
<dbReference type="InterPro" id="IPR018149">
    <property type="entry name" value="Lys-tRNA-synth_II_C"/>
</dbReference>
<dbReference type="InterPro" id="IPR012340">
    <property type="entry name" value="NA-bd_OB-fold"/>
</dbReference>
<dbReference type="InterPro" id="IPR004365">
    <property type="entry name" value="NA-bd_OB_tRNA"/>
</dbReference>
<dbReference type="InterPro" id="IPR031553">
    <property type="entry name" value="tRNA-synt_2_TM"/>
</dbReference>
<dbReference type="NCBIfam" id="TIGR00499">
    <property type="entry name" value="lysS_bact"/>
    <property type="match status" value="1"/>
</dbReference>
<dbReference type="NCBIfam" id="NF001756">
    <property type="entry name" value="PRK00484.1"/>
    <property type="match status" value="1"/>
</dbReference>
<dbReference type="NCBIfam" id="NF002821">
    <property type="entry name" value="PRK02983.1"/>
    <property type="match status" value="1"/>
</dbReference>
<dbReference type="PANTHER" id="PTHR42918:SF15">
    <property type="entry name" value="LYSINE--TRNA LIGASE, CHLOROPLASTIC_MITOCHONDRIAL"/>
    <property type="match status" value="1"/>
</dbReference>
<dbReference type="PANTHER" id="PTHR42918">
    <property type="entry name" value="LYSYL-TRNA SYNTHETASE"/>
    <property type="match status" value="1"/>
</dbReference>
<dbReference type="Pfam" id="PF09924">
    <property type="entry name" value="LPG_synthase_C"/>
    <property type="match status" value="1"/>
</dbReference>
<dbReference type="Pfam" id="PF00152">
    <property type="entry name" value="tRNA-synt_2"/>
    <property type="match status" value="1"/>
</dbReference>
<dbReference type="Pfam" id="PF16995">
    <property type="entry name" value="tRNA-synt_2_TM"/>
    <property type="match status" value="1"/>
</dbReference>
<dbReference type="Pfam" id="PF01336">
    <property type="entry name" value="tRNA_anti-codon"/>
    <property type="match status" value="1"/>
</dbReference>
<dbReference type="PRINTS" id="PR00982">
    <property type="entry name" value="TRNASYNTHLYS"/>
</dbReference>
<dbReference type="SUPFAM" id="SSF55681">
    <property type="entry name" value="Class II aaRS and biotin synthetases"/>
    <property type="match status" value="1"/>
</dbReference>
<dbReference type="SUPFAM" id="SSF50249">
    <property type="entry name" value="Nucleic acid-binding proteins"/>
    <property type="match status" value="1"/>
</dbReference>
<dbReference type="PROSITE" id="PS50862">
    <property type="entry name" value="AA_TRNA_LIGASE_II"/>
    <property type="match status" value="1"/>
</dbReference>
<accession>Q740J9</accession>
<keyword id="KW-0030">Aminoacyl-tRNA synthetase</keyword>
<keyword id="KW-0046">Antibiotic resistance</keyword>
<keyword id="KW-0067">ATP-binding</keyword>
<keyword id="KW-1003">Cell membrane</keyword>
<keyword id="KW-0238">DNA-binding</keyword>
<keyword id="KW-0436">Ligase</keyword>
<keyword id="KW-0443">Lipid metabolism</keyword>
<keyword id="KW-0460">Magnesium</keyword>
<keyword id="KW-0472">Membrane</keyword>
<keyword id="KW-0479">Metal-binding</keyword>
<keyword id="KW-0511">Multifunctional enzyme</keyword>
<keyword id="KW-0547">Nucleotide-binding</keyword>
<keyword id="KW-1185">Reference proteome</keyword>
<keyword id="KW-0808">Transferase</keyword>
<keyword id="KW-0812">Transmembrane</keyword>
<keyword id="KW-1133">Transmembrane helix</keyword>
<keyword id="KW-0843">Virulence</keyword>
<reference key="1">
    <citation type="journal article" date="2005" name="Proc. Natl. Acad. Sci. U.S.A.">
        <title>The complete genome sequence of Mycobacterium avium subspecies paratuberculosis.</title>
        <authorList>
            <person name="Li L."/>
            <person name="Bannantine J.P."/>
            <person name="Zhang Q."/>
            <person name="Amonsin A."/>
            <person name="May B.J."/>
            <person name="Alt D."/>
            <person name="Banerji N."/>
            <person name="Kanjilal S."/>
            <person name="Kapur V."/>
        </authorList>
    </citation>
    <scope>NUCLEOTIDE SEQUENCE [LARGE SCALE GENOMIC DNA]</scope>
    <source>
        <strain>ATCC BAA-968 / K-10</strain>
    </source>
</reference>
<name>LYSX_MYCPA</name>
<protein>
    <recommendedName>
        <fullName>Lysylphosphatidylglycerol biosynthesis bifunctional protein LysX</fullName>
    </recommendedName>
    <domain>
        <recommendedName>
            <fullName>Lysine--tRNA ligase</fullName>
            <ecNumber>6.1.1.6</ecNumber>
        </recommendedName>
        <alternativeName>
            <fullName>Lysyl-tRNA synthetase</fullName>
            <shortName>LysRS</shortName>
        </alternativeName>
    </domain>
    <domain>
        <recommendedName>
            <fullName>Phosphatidylglycerol lysyltransferase</fullName>
            <ecNumber>2.3.2.3</ecNumber>
        </recommendedName>
        <alternativeName>
            <fullName>Lysylphosphatidylglycerol synthetase</fullName>
            <shortName>LPG synthetase</shortName>
        </alternativeName>
    </domain>
</protein>
<feature type="chain" id="PRO_0000394323" description="Lysylphosphatidylglycerol biosynthesis bifunctional protein LysX">
    <location>
        <begin position="1"/>
        <end position="1177"/>
    </location>
</feature>
<feature type="transmembrane region" description="Helical" evidence="2">
    <location>
        <begin position="93"/>
        <end position="113"/>
    </location>
</feature>
<feature type="transmembrane region" description="Helical" evidence="2">
    <location>
        <begin position="135"/>
        <end position="155"/>
    </location>
</feature>
<feature type="transmembrane region" description="Helical" evidence="2">
    <location>
        <begin position="159"/>
        <end position="179"/>
    </location>
</feature>
<feature type="transmembrane region" description="Helical" evidence="2">
    <location>
        <begin position="189"/>
        <end position="209"/>
    </location>
</feature>
<feature type="transmembrane region" description="Helical" evidence="2">
    <location>
        <begin position="227"/>
        <end position="247"/>
    </location>
</feature>
<feature type="transmembrane region" description="Helical" evidence="2">
    <location>
        <begin position="281"/>
        <end position="301"/>
    </location>
</feature>
<feature type="DNA-binding region" description="OB">
    <location>
        <begin position="738"/>
        <end position="816"/>
    </location>
</feature>
<feature type="region of interest" description="Phosphatidylglycerol lysyltransferase">
    <location>
        <begin position="1"/>
        <end position="676"/>
    </location>
</feature>
<feature type="region of interest" description="Disordered" evidence="3">
    <location>
        <begin position="1"/>
        <end position="40"/>
    </location>
</feature>
<feature type="region of interest" description="Disordered" evidence="3">
    <location>
        <begin position="61"/>
        <end position="85"/>
    </location>
</feature>
<feature type="region of interest" description="Disordered" evidence="3">
    <location>
        <begin position="673"/>
        <end position="693"/>
    </location>
</feature>
<feature type="region of interest" description="Lysine--tRNA ligase">
    <location>
        <begin position="677"/>
        <end position="1177"/>
    </location>
</feature>
<feature type="compositionally biased region" description="Low complexity" evidence="3">
    <location>
        <begin position="65"/>
        <end position="85"/>
    </location>
</feature>
<feature type="compositionally biased region" description="Basic and acidic residues" evidence="3">
    <location>
        <begin position="681"/>
        <end position="693"/>
    </location>
</feature>
<feature type="binding site" evidence="1">
    <location>
        <position position="1089"/>
    </location>
    <ligand>
        <name>Mg(2+)</name>
        <dbReference type="ChEBI" id="CHEBI:18420"/>
        <label>1</label>
    </ligand>
</feature>
<feature type="binding site" evidence="1">
    <location>
        <position position="1096"/>
    </location>
    <ligand>
        <name>Mg(2+)</name>
        <dbReference type="ChEBI" id="CHEBI:18420"/>
        <label>1</label>
    </ligand>
</feature>
<feature type="binding site" evidence="1">
    <location>
        <position position="1096"/>
    </location>
    <ligand>
        <name>Mg(2+)</name>
        <dbReference type="ChEBI" id="CHEBI:18420"/>
        <label>2</label>
    </ligand>
</feature>
<sequence>MRRAGRSRQFSSVEEAFSTSAARPGPRGRRSGRENTAKFVPATLSASTSFSRIEGISSRSVTLASPGSRSGSGPRSGPRLGPRNRSTSRYRWVPAAAGWTVGVIATVSLLGSVSPLIRYLIKVPREFINDYLFNFPDTSIAWSFVLALLAAALTARKRIAWLLLLGNMILAAALNVADIAAGDNTAAEIFGENLGFAVHIVAIVLLVLAYREFWAKVRKGALVKAAAVLVAGDVVGILVSWGLVELFPGTLARQDRLPYVVNRVVGFALADPDLFTGRPHVFLNAIFGLFGALALIMATIVLFQSQRAENALTGEDESAIRGLLELYGKNDSLGYFATRRDKSVVFAQSGRAAITYRVEIGVCLASGDPIGDPRAWPQAVDAWLGLCQTYGWAPGVMGASTQGARTYREAGLNALELGDEAILRTSEFKLSGPDMRGVRQAVTRARRAGLTVRIRRHRDISPEAMADTIARADAWRDTQTERGFSMALGRLGDPADGDCLLVEAIDRDGSVVAMLSLVPWGTTGVSLDLMRRSPSSPNGTIELMVSELALNAESLGITRISLNFAMFRSAFEQGAQLGAGPVARLWRGLLLFFSRWWQLETLYRSNMKYQPDWVPRYACYEDARLIPRVGVASVIAEGFLVLPFSRRDKVHTGHHPAVPARLAQSGLLHHDGSAPDVSGLRPERTDAEEARSRLPEQVRVRLAKLKVLQRNGVDAYPVGCPPSHTVAQALDADDQQDITVAGRILRIRDFGGVLFAQLRDWSGEMQVLLDNSRLERGRTADFTAAIDLGDLVEVSGQMGFSKKGTRSLIVTDWRMIGKCLRPLPNKWKGLTDPEARVRTRYVDLAVNPESRELIAARSEVLRSVRQTLFAKGFIEVETPILQQIHGGATARPFVTHINTYDMDLFLRIAPELYLKRLCVGGVERVFELGRAFRNEGVDFSHNPEFTLLEAYQAHADYRVWIDGCRELIQNAAQAAHGEQTVLRPGADGRLQPVDISGIWAVKTVHDAVSEALGEQVDPGTSLSTLRKLSDAARIPYRAHWDAGAVVLELYEHLVEDRTEEPTFYVDFPTSVSPLTRPHRSRPGVAERWDLVAWGVELATAYSELTDPVEQRRRLQEQSLLAAGGDPEAMELDEDFLQAMEYAMPPTGGLGMGVDRLVMLITGRSIRETLPFPLAKPH</sequence>
<gene>
    <name type="primary">lysX</name>
    <name type="ordered locus">MAP_1351c</name>
</gene>
<evidence type="ECO:0000250" key="1"/>
<evidence type="ECO:0000255" key="2"/>
<evidence type="ECO:0000256" key="3">
    <source>
        <dbReference type="SAM" id="MobiDB-lite"/>
    </source>
</evidence>
<evidence type="ECO:0000305" key="4"/>